<dbReference type="EMBL" id="AL353814">
    <property type="protein sequence ID" value="CAB88420.1"/>
    <property type="molecule type" value="Genomic_DNA"/>
</dbReference>
<dbReference type="EMBL" id="CP002686">
    <property type="protein sequence ID" value="AEE77866.1"/>
    <property type="molecule type" value="Genomic_DNA"/>
</dbReference>
<dbReference type="EMBL" id="BX824673">
    <property type="status" value="NOT_ANNOTATED_CDS"/>
    <property type="molecule type" value="mRNA"/>
</dbReference>
<dbReference type="PIR" id="T49128">
    <property type="entry name" value="T49128"/>
</dbReference>
<dbReference type="RefSeq" id="NP_189998.1">
    <property type="nucleotide sequence ID" value="NM_114280.4"/>
</dbReference>
<dbReference type="FunCoup" id="Q9LXQ1">
    <property type="interactions" value="2"/>
</dbReference>
<dbReference type="STRING" id="3702.Q9LXQ1"/>
<dbReference type="PaxDb" id="3702-AT3G44120.1"/>
<dbReference type="ProteomicsDB" id="230668"/>
<dbReference type="EnsemblPlants" id="AT3G44120.1">
    <property type="protein sequence ID" value="AT3G44120.1"/>
    <property type="gene ID" value="AT3G44120"/>
</dbReference>
<dbReference type="GeneID" id="823533"/>
<dbReference type="Gramene" id="AT3G44120.1">
    <property type="protein sequence ID" value="AT3G44120.1"/>
    <property type="gene ID" value="AT3G44120"/>
</dbReference>
<dbReference type="KEGG" id="ath:AT3G44120"/>
<dbReference type="Araport" id="AT3G44120"/>
<dbReference type="TAIR" id="AT3G44120"/>
<dbReference type="HOGENOM" id="CLU_034692_0_0_1"/>
<dbReference type="InParanoid" id="Q9LXQ1"/>
<dbReference type="OMA" id="RSSCKEW"/>
<dbReference type="PhylomeDB" id="Q9LXQ1"/>
<dbReference type="PRO" id="PR:Q9LXQ1"/>
<dbReference type="Proteomes" id="UP000006548">
    <property type="component" value="Chromosome 3"/>
</dbReference>
<dbReference type="ExpressionAtlas" id="Q9LXQ1">
    <property type="expression patterns" value="baseline and differential"/>
</dbReference>
<dbReference type="CDD" id="cd22157">
    <property type="entry name" value="F-box_AtFBW1-like"/>
    <property type="match status" value="1"/>
</dbReference>
<dbReference type="Gene3D" id="1.20.1280.50">
    <property type="match status" value="1"/>
</dbReference>
<dbReference type="InterPro" id="IPR006527">
    <property type="entry name" value="F-box-assoc_dom_typ1"/>
</dbReference>
<dbReference type="InterPro" id="IPR017451">
    <property type="entry name" value="F-box-assoc_interact_dom"/>
</dbReference>
<dbReference type="InterPro" id="IPR036047">
    <property type="entry name" value="F-box-like_dom_sf"/>
</dbReference>
<dbReference type="InterPro" id="IPR001810">
    <property type="entry name" value="F-box_dom"/>
</dbReference>
<dbReference type="InterPro" id="IPR011043">
    <property type="entry name" value="Gal_Oxase/kelch_b-propeller"/>
</dbReference>
<dbReference type="InterPro" id="IPR050796">
    <property type="entry name" value="SCF_F-box_component"/>
</dbReference>
<dbReference type="NCBIfam" id="TIGR01640">
    <property type="entry name" value="F_box_assoc_1"/>
    <property type="match status" value="1"/>
</dbReference>
<dbReference type="PANTHER" id="PTHR31672">
    <property type="entry name" value="BNACNNG10540D PROTEIN"/>
    <property type="match status" value="1"/>
</dbReference>
<dbReference type="PANTHER" id="PTHR31672:SF13">
    <property type="entry name" value="F-BOX PROTEIN CPR30-LIKE"/>
    <property type="match status" value="1"/>
</dbReference>
<dbReference type="Pfam" id="PF00646">
    <property type="entry name" value="F-box"/>
    <property type="match status" value="1"/>
</dbReference>
<dbReference type="Pfam" id="PF07734">
    <property type="entry name" value="FBA_1"/>
    <property type="match status" value="1"/>
</dbReference>
<dbReference type="SMART" id="SM00256">
    <property type="entry name" value="FBOX"/>
    <property type="match status" value="1"/>
</dbReference>
<dbReference type="SUPFAM" id="SSF81383">
    <property type="entry name" value="F-box domain"/>
    <property type="match status" value="1"/>
</dbReference>
<dbReference type="SUPFAM" id="SSF50965">
    <property type="entry name" value="Galactose oxidase, central domain"/>
    <property type="match status" value="1"/>
</dbReference>
<dbReference type="PROSITE" id="PS50181">
    <property type="entry name" value="FBOX"/>
    <property type="match status" value="1"/>
</dbReference>
<name>FBK73_ARATH</name>
<protein>
    <recommendedName>
        <fullName>F-box/kelch-repeat protein At3g44120</fullName>
    </recommendedName>
</protein>
<comment type="sequence caution" evidence="2">
    <conflict type="frameshift">
        <sequence resource="EMBL" id="BX824673"/>
    </conflict>
</comment>
<accession>Q9LXQ1</accession>
<accession>Q84V10</accession>
<feature type="chain" id="PRO_0000283233" description="F-box/kelch-repeat protein At3g44120">
    <location>
        <begin position="1"/>
        <end position="384"/>
    </location>
</feature>
<feature type="domain" description="F-box" evidence="1">
    <location>
        <begin position="1"/>
        <end position="46"/>
    </location>
</feature>
<feature type="repeat" description="Kelch 1">
    <location>
        <begin position="156"/>
        <end position="202"/>
    </location>
</feature>
<feature type="repeat" description="Kelch 2">
    <location>
        <begin position="264"/>
        <end position="314"/>
    </location>
</feature>
<feature type="repeat" description="Kelch 3">
    <location>
        <begin position="352"/>
        <end position="384"/>
    </location>
</feature>
<sequence>MTLPELPKDLVEEILCFVPATSLKRLRSSCKEWNRLFKDDKRFARKHIEKAAKQFQPLTLTKNYRICPINVNLHGTTPSLEVKNEVSLVDPHSKNSAAQFNIDRVFHCDGLLLCTSQKDSRFVVWNPLTGVTKWIELGDRYNEGMAFILGYDNKSCNKSYKAMSFNYLDKDSEIYEFSSDSWRVIDDIIKPPHYMDYFRECFSLKGNTYWLGIDRRRRPPDLRITLIKFDFGTERFGYVSLPPPCQVHGFEASNLSVVGDEKLSVLVQGGSTSKTEVWVTSKIGEANVVSWSKVLSLYPKPDVGFWHGLSFLLDEEKKVVLCCKSKGWMEEEDEENVYSVGEDTKFILLNFGVQTIGGYSPIIVNYVPSLGQIELAGSKRKRDY</sequence>
<evidence type="ECO:0000255" key="1">
    <source>
        <dbReference type="PROSITE-ProRule" id="PRU00080"/>
    </source>
</evidence>
<evidence type="ECO:0000305" key="2"/>
<keyword id="KW-0880">Kelch repeat</keyword>
<keyword id="KW-1185">Reference proteome</keyword>
<keyword id="KW-0677">Repeat</keyword>
<gene>
    <name type="ordered locus">At3g44120</name>
    <name type="ORF">F26G5.70</name>
</gene>
<reference key="1">
    <citation type="journal article" date="2000" name="Nature">
        <title>Sequence and analysis of chromosome 3 of the plant Arabidopsis thaliana.</title>
        <authorList>
            <person name="Salanoubat M."/>
            <person name="Lemcke K."/>
            <person name="Rieger M."/>
            <person name="Ansorge W."/>
            <person name="Unseld M."/>
            <person name="Fartmann B."/>
            <person name="Valle G."/>
            <person name="Bloecker H."/>
            <person name="Perez-Alonso M."/>
            <person name="Obermaier B."/>
            <person name="Delseny M."/>
            <person name="Boutry M."/>
            <person name="Grivell L.A."/>
            <person name="Mache R."/>
            <person name="Puigdomenech P."/>
            <person name="De Simone V."/>
            <person name="Choisne N."/>
            <person name="Artiguenave F."/>
            <person name="Robert C."/>
            <person name="Brottier P."/>
            <person name="Wincker P."/>
            <person name="Cattolico L."/>
            <person name="Weissenbach J."/>
            <person name="Saurin W."/>
            <person name="Quetier F."/>
            <person name="Schaefer M."/>
            <person name="Mueller-Auer S."/>
            <person name="Gabel C."/>
            <person name="Fuchs M."/>
            <person name="Benes V."/>
            <person name="Wurmbach E."/>
            <person name="Drzonek H."/>
            <person name="Erfle H."/>
            <person name="Jordan N."/>
            <person name="Bangert S."/>
            <person name="Wiedelmann R."/>
            <person name="Kranz H."/>
            <person name="Voss H."/>
            <person name="Holland R."/>
            <person name="Brandt P."/>
            <person name="Nyakatura G."/>
            <person name="Vezzi A."/>
            <person name="D'Angelo M."/>
            <person name="Pallavicini A."/>
            <person name="Toppo S."/>
            <person name="Simionati B."/>
            <person name="Conrad A."/>
            <person name="Hornischer K."/>
            <person name="Kauer G."/>
            <person name="Loehnert T.-H."/>
            <person name="Nordsiek G."/>
            <person name="Reichelt J."/>
            <person name="Scharfe M."/>
            <person name="Schoen O."/>
            <person name="Bargues M."/>
            <person name="Terol J."/>
            <person name="Climent J."/>
            <person name="Navarro P."/>
            <person name="Collado C."/>
            <person name="Perez-Perez A."/>
            <person name="Ottenwaelder B."/>
            <person name="Duchemin D."/>
            <person name="Cooke R."/>
            <person name="Laudie M."/>
            <person name="Berger-Llauro C."/>
            <person name="Purnelle B."/>
            <person name="Masuy D."/>
            <person name="de Haan M."/>
            <person name="Maarse A.C."/>
            <person name="Alcaraz J.-P."/>
            <person name="Cottet A."/>
            <person name="Casacuberta E."/>
            <person name="Monfort A."/>
            <person name="Argiriou A."/>
            <person name="Flores M."/>
            <person name="Liguori R."/>
            <person name="Vitale D."/>
            <person name="Mannhaupt G."/>
            <person name="Haase D."/>
            <person name="Schoof H."/>
            <person name="Rudd S."/>
            <person name="Zaccaria P."/>
            <person name="Mewes H.-W."/>
            <person name="Mayer K.F.X."/>
            <person name="Kaul S."/>
            <person name="Town C.D."/>
            <person name="Koo H.L."/>
            <person name="Tallon L.J."/>
            <person name="Jenkins J."/>
            <person name="Rooney T."/>
            <person name="Rizzo M."/>
            <person name="Walts A."/>
            <person name="Utterback T."/>
            <person name="Fujii C.Y."/>
            <person name="Shea T.P."/>
            <person name="Creasy T.H."/>
            <person name="Haas B."/>
            <person name="Maiti R."/>
            <person name="Wu D."/>
            <person name="Peterson J."/>
            <person name="Van Aken S."/>
            <person name="Pai G."/>
            <person name="Militscher J."/>
            <person name="Sellers P."/>
            <person name="Gill J.E."/>
            <person name="Feldblyum T.V."/>
            <person name="Preuss D."/>
            <person name="Lin X."/>
            <person name="Nierman W.C."/>
            <person name="Salzberg S.L."/>
            <person name="White O."/>
            <person name="Venter J.C."/>
            <person name="Fraser C.M."/>
            <person name="Kaneko T."/>
            <person name="Nakamura Y."/>
            <person name="Sato S."/>
            <person name="Kato T."/>
            <person name="Asamizu E."/>
            <person name="Sasamoto S."/>
            <person name="Kimura T."/>
            <person name="Idesawa K."/>
            <person name="Kawashima K."/>
            <person name="Kishida Y."/>
            <person name="Kiyokawa C."/>
            <person name="Kohara M."/>
            <person name="Matsumoto M."/>
            <person name="Matsuno A."/>
            <person name="Muraki A."/>
            <person name="Nakayama S."/>
            <person name="Nakazaki N."/>
            <person name="Shinpo S."/>
            <person name="Takeuchi C."/>
            <person name="Wada T."/>
            <person name="Watanabe A."/>
            <person name="Yamada M."/>
            <person name="Yasuda M."/>
            <person name="Tabata S."/>
        </authorList>
    </citation>
    <scope>NUCLEOTIDE SEQUENCE [LARGE SCALE GENOMIC DNA]</scope>
    <source>
        <strain>cv. Columbia</strain>
    </source>
</reference>
<reference key="2">
    <citation type="journal article" date="2017" name="Plant J.">
        <title>Araport11: a complete reannotation of the Arabidopsis thaliana reference genome.</title>
        <authorList>
            <person name="Cheng C.Y."/>
            <person name="Krishnakumar V."/>
            <person name="Chan A.P."/>
            <person name="Thibaud-Nissen F."/>
            <person name="Schobel S."/>
            <person name="Town C.D."/>
        </authorList>
    </citation>
    <scope>GENOME REANNOTATION</scope>
    <source>
        <strain>cv. Columbia</strain>
    </source>
</reference>
<reference key="3">
    <citation type="journal article" date="2004" name="Genome Res.">
        <title>Whole genome sequence comparisons and 'full-length' cDNA sequences: a combined approach to evaluate and improve Arabidopsis genome annotation.</title>
        <authorList>
            <person name="Castelli V."/>
            <person name="Aury J.-M."/>
            <person name="Jaillon O."/>
            <person name="Wincker P."/>
            <person name="Clepet C."/>
            <person name="Menard M."/>
            <person name="Cruaud C."/>
            <person name="Quetier F."/>
            <person name="Scarpelli C."/>
            <person name="Schaechter V."/>
            <person name="Temple G."/>
            <person name="Caboche M."/>
            <person name="Weissenbach J."/>
            <person name="Salanoubat M."/>
        </authorList>
    </citation>
    <scope>NUCLEOTIDE SEQUENCE [LARGE SCALE MRNA]</scope>
    <source>
        <strain>cv. Columbia</strain>
    </source>
</reference>
<organism>
    <name type="scientific">Arabidopsis thaliana</name>
    <name type="common">Mouse-ear cress</name>
    <dbReference type="NCBI Taxonomy" id="3702"/>
    <lineage>
        <taxon>Eukaryota</taxon>
        <taxon>Viridiplantae</taxon>
        <taxon>Streptophyta</taxon>
        <taxon>Embryophyta</taxon>
        <taxon>Tracheophyta</taxon>
        <taxon>Spermatophyta</taxon>
        <taxon>Magnoliopsida</taxon>
        <taxon>eudicotyledons</taxon>
        <taxon>Gunneridae</taxon>
        <taxon>Pentapetalae</taxon>
        <taxon>rosids</taxon>
        <taxon>malvids</taxon>
        <taxon>Brassicales</taxon>
        <taxon>Brassicaceae</taxon>
        <taxon>Camelineae</taxon>
        <taxon>Arabidopsis</taxon>
    </lineage>
</organism>
<proteinExistence type="evidence at transcript level"/>